<comment type="function">
    <text evidence="5">Component of the exocyst complex involved in the docking of exocytic vesicles with fusion sites on the plasma membrane during regulated or polarized secretion (PubMed:31299202). Involved in PIN4 exocytosis and gravitropic responses in columella cells (PubMed:31299202). By monitoring PIN4 distribution in columella cells, modulates auxin repartition and subsequently regulates the root system architecture (RSA), thus being a component of the auxin-dependent root directional growth (ARD) (PubMed:31299202).</text>
</comment>
<comment type="subunit">
    <text evidence="9">Subunit of the exocyst complex.</text>
</comment>
<comment type="subcellular location">
    <subcellularLocation>
        <location evidence="1">Membrane</location>
        <topology evidence="1">Single-pass membrane protein</topology>
    </subcellularLocation>
</comment>
<comment type="tissue specificity">
    <text evidence="4 5">Confined to the outer layer of the columella cells in the root tips of young seedlings.</text>
</comment>
<comment type="disruption phenotype">
    <text evidence="5">Alteration of root gravitropic responses (e.g. delay, auxin-dependent root directional growth and larger variation of root tip angles) resulting in deeper root system architecture (RSA) and enhanced drought resistance (PubMed:31299202). Disturbed PIN4 distribution in columella cells associated with a perturbation of the auxin distribution pattern and an asymmetric accumulation of DR5 in the downward peripheral layer under gravistimulus (PubMed:31299202).</text>
</comment>
<comment type="miscellaneous">
    <text evidence="5">Associated with natural variation of agravitropic root growth upon auxin transport perturbation with N-1-naphtylphthalamic acid (NPA).</text>
</comment>
<comment type="similarity">
    <text evidence="8">Belongs to the EXO70 family.</text>
</comment>
<comment type="sequence caution" evidence="8">
    <conflict type="erroneous gene model prediction">
        <sequence resource="EMBL-CDS" id="BAB10532"/>
    </conflict>
</comment>
<feature type="chain" id="PRO_0000448067" description="Exocyst complex component EXO70A3">
    <location>
        <begin position="1"/>
        <end position="586"/>
    </location>
</feature>
<feature type="transmembrane region" description="Helical" evidence="1">
    <location>
        <begin position="258"/>
        <end position="278"/>
    </location>
</feature>
<feature type="region of interest" description="Disordered" evidence="3">
    <location>
        <begin position="119"/>
        <end position="149"/>
    </location>
</feature>
<feature type="glycosylation site" description="N-linked (GlcNAc...) asparagine" evidence="2">
    <location>
        <position position="65"/>
    </location>
</feature>
<feature type="glycosylation site" description="N-linked (GlcNAc...) asparagine" evidence="2">
    <location>
        <position position="106"/>
    </location>
</feature>
<feature type="glycosylation site" description="N-linked (GlcNAc...) asparagine" evidence="2">
    <location>
        <position position="321"/>
    </location>
</feature>
<feature type="glycosylation site" description="N-linked (GlcNAc...) asparagine" evidence="2">
    <location>
        <position position="487"/>
    </location>
</feature>
<evidence type="ECO:0000255" key="1"/>
<evidence type="ECO:0000255" key="2">
    <source>
        <dbReference type="PROSITE-ProRule" id="PRU00498"/>
    </source>
</evidence>
<evidence type="ECO:0000256" key="3">
    <source>
        <dbReference type="SAM" id="MobiDB-lite"/>
    </source>
</evidence>
<evidence type="ECO:0000269" key="4">
    <source>
    </source>
</evidence>
<evidence type="ECO:0000269" key="5">
    <source>
    </source>
</evidence>
<evidence type="ECO:0000303" key="6">
    <source>
    </source>
</evidence>
<evidence type="ECO:0000303" key="7">
    <source>
    </source>
</evidence>
<evidence type="ECO:0000305" key="8"/>
<evidence type="ECO:0000305" key="9">
    <source>
    </source>
</evidence>
<evidence type="ECO:0000312" key="10">
    <source>
        <dbReference type="Araport" id="AT5G52350"/>
    </source>
</evidence>
<evidence type="ECO:0000312" key="11">
    <source>
        <dbReference type="EMBL" id="BAB10532.1"/>
    </source>
</evidence>
<organism>
    <name type="scientific">Arabidopsis thaliana</name>
    <name type="common">Mouse-ear cress</name>
    <dbReference type="NCBI Taxonomy" id="3702"/>
    <lineage>
        <taxon>Eukaryota</taxon>
        <taxon>Viridiplantae</taxon>
        <taxon>Streptophyta</taxon>
        <taxon>Embryophyta</taxon>
        <taxon>Tracheophyta</taxon>
        <taxon>Spermatophyta</taxon>
        <taxon>Magnoliopsida</taxon>
        <taxon>eudicotyledons</taxon>
        <taxon>Gunneridae</taxon>
        <taxon>Pentapetalae</taxon>
        <taxon>rosids</taxon>
        <taxon>malvids</taxon>
        <taxon>Brassicales</taxon>
        <taxon>Brassicaceae</taxon>
        <taxon>Camelineae</taxon>
        <taxon>Arabidopsis</taxon>
    </lineage>
</organism>
<gene>
    <name evidence="6 7" type="primary">EXO70A3</name>
    <name evidence="10" type="ordered locus">At5g52350</name>
    <name evidence="11" type="ORF">K24M7.8</name>
</gene>
<keyword id="KW-0927">Auxin signaling pathway</keyword>
<keyword id="KW-0217">Developmental protein</keyword>
<keyword id="KW-0268">Exocytosis</keyword>
<keyword id="KW-0325">Glycoprotein</keyword>
<keyword id="KW-0472">Membrane</keyword>
<keyword id="KW-0653">Protein transport</keyword>
<keyword id="KW-1185">Reference proteome</keyword>
<keyword id="KW-0812">Transmembrane</keyword>
<keyword id="KW-1133">Transmembrane helix</keyword>
<keyword id="KW-0813">Transport</keyword>
<proteinExistence type="evidence at protein level"/>
<name>E70A3_ARATH</name>
<sequence length="586" mass="67572">MSNVLDKTNLHELSIAPKISTHDEKLYECTKCGIFFHRDSVESATEINPHENLGEVRAVEDKPNNESIKVDERGTCNFHFIDEHHGKVDGINTEYDASKFKQILENYSKLTEPNQLFECLPSNLRPPSDDEGSDGKSHDPQSNGLGKTDYTVPTIIPPTVLPVLHDLAQQMVKAGHQQELFKTYRDIRRAVLAQSLEKLGVERHSKYDVERMNQDVFEAKIMNWIHYIRISVKLLFAAEKEICHQILDGVEPFRDQSFAEITTISFGMLLSFGYAIAISRRSPEKVFVILDMYEIMIELQPEFELIFGSKPCTEMKEDALNLTKLLAQTVKETIADFEVAIEMDATETVVMDGSVHALTSYVARYVKFLFDYEPTLRQLFQEFNSNDPDTKLKSVMTGIMRALRNNLDGKSRQFEDAALTQLFLMNNVYYIVRNFRREEAKNFLGDDLVQTHRRIVQQHAKQYQTISWNKILQCITVQSSKSGLIKNESIKKTLVKEKFKTFNSQFEELHQRQCQWSVSDVELRESLRLAIAEVLLPAYGSFLKRFGPMIESGKNSQKYIRFTPEDLERMLNDFFQGKNLDVSPKR</sequence>
<reference key="1">
    <citation type="journal article" date="2000" name="DNA Res.">
        <title>Structural analysis of Arabidopsis thaliana chromosome 5. X. Sequence features of the regions of 3,076,755 bp covered by sixty P1 and TAC clones.</title>
        <authorList>
            <person name="Sato S."/>
            <person name="Nakamura Y."/>
            <person name="Kaneko T."/>
            <person name="Katoh T."/>
            <person name="Asamizu E."/>
            <person name="Kotani H."/>
            <person name="Tabata S."/>
        </authorList>
    </citation>
    <scope>NUCLEOTIDE SEQUENCE [LARGE SCALE GENOMIC DNA]</scope>
    <source>
        <strain>cv. Columbia</strain>
    </source>
</reference>
<reference key="2">
    <citation type="journal article" date="2017" name="Plant J.">
        <title>Araport11: a complete reannotation of the Arabidopsis thaliana reference genome.</title>
        <authorList>
            <person name="Cheng C.Y."/>
            <person name="Krishnakumar V."/>
            <person name="Chan A.P."/>
            <person name="Thibaud-Nissen F."/>
            <person name="Schobel S."/>
            <person name="Town C.D."/>
        </authorList>
    </citation>
    <scope>GENOME REANNOTATION</scope>
    <source>
        <strain>cv. Columbia</strain>
    </source>
</reference>
<reference key="3">
    <citation type="journal article" date="2006" name="Plant J.">
        <title>AtEXO70A1, a member of a family of putative exocyst subunits specifically expanded in land plants, is important for polar growth and plant development.</title>
        <authorList>
            <person name="Synek L."/>
            <person name="Schlager N."/>
            <person name="Elias M."/>
            <person name="Quentin M."/>
            <person name="Hauser M.-T."/>
            <person name="Zarsky V."/>
        </authorList>
    </citation>
    <scope>GENE FAMILY</scope>
    <scope>NOMENCLATURE</scope>
</reference>
<reference key="4">
    <citation type="journal article" date="2010" name="Plant Physiol.">
        <title>Expression and functional analyses of EXO70 genes in Arabidopsis implicate their roles in regulating cell type-specific exocytosis.</title>
        <authorList>
            <person name="Li S."/>
            <person name="van Os G.M.A."/>
            <person name="Ren S."/>
            <person name="Yu D."/>
            <person name="Ketelaar T."/>
            <person name="Emons A.M.C."/>
            <person name="Liu C.-M."/>
        </authorList>
    </citation>
    <scope>TISSUE SPECIFICITY</scope>
    <scope>GENE FAMILY</scope>
</reference>
<reference key="5">
    <citation type="journal article" date="2019" name="Cell">
        <title>Root system depth in Arabidopsis is shaped by EXOCYST70A3 via the dynamic modulation of auxin transport.</title>
        <authorList>
            <person name="Ogura T."/>
            <person name="Goeschl C."/>
            <person name="Filiault D."/>
            <person name="Wolhrab B."/>
            <person name="Satbhai S.B."/>
            <person name="Busch W."/>
        </authorList>
    </citation>
    <scope>FUNCTION</scope>
    <scope>DISRUPTION PHENOTYPE</scope>
    <scope>TISSUE SPECIFICITY</scope>
    <scope>SUBUNIT</scope>
    <source>
        <strain>cv. C24</strain>
        <strain>cv. Columbia</strain>
        <strain>cv. Cvi-0</strain>
        <strain>cv. Lac-5</strain>
        <strain>cv. Ler-1</strain>
        <strain>cv. Mib-60</strain>
        <strain>cv. Sha</strain>
        <strain>cv. Ty-0</strain>
        <strain>cv. Wassilewskija-2</strain>
    </source>
</reference>
<dbReference type="EMBL" id="AB019226">
    <property type="protein sequence ID" value="BAB10532.1"/>
    <property type="status" value="ALT_SEQ"/>
    <property type="molecule type" value="Genomic_DNA"/>
</dbReference>
<dbReference type="EMBL" id="CP002688">
    <property type="protein sequence ID" value="AED96204.1"/>
    <property type="molecule type" value="Genomic_DNA"/>
</dbReference>
<dbReference type="RefSeq" id="NP_200048.2">
    <property type="nucleotide sequence ID" value="NM_124614.2"/>
</dbReference>
<dbReference type="SMR" id="F4KG58"/>
<dbReference type="FunCoup" id="F4KG58">
    <property type="interactions" value="3266"/>
</dbReference>
<dbReference type="STRING" id="3702.F4KG58"/>
<dbReference type="GlyCosmos" id="F4KG58">
    <property type="glycosylation" value="4 sites, No reported glycans"/>
</dbReference>
<dbReference type="GlyGen" id="F4KG58">
    <property type="glycosylation" value="4 sites"/>
</dbReference>
<dbReference type="iPTMnet" id="F4KG58"/>
<dbReference type="PaxDb" id="3702-AT5G52350.1"/>
<dbReference type="ProteomicsDB" id="218279"/>
<dbReference type="EnsemblPlants" id="AT5G52350.1">
    <property type="protein sequence ID" value="AT5G52350.1"/>
    <property type="gene ID" value="AT5G52350"/>
</dbReference>
<dbReference type="GeneID" id="835311"/>
<dbReference type="Gramene" id="AT5G52350.1">
    <property type="protein sequence ID" value="AT5G52350.1"/>
    <property type="gene ID" value="AT5G52350"/>
</dbReference>
<dbReference type="KEGG" id="ath:AT5G52350"/>
<dbReference type="Araport" id="AT5G52350"/>
<dbReference type="TAIR" id="AT5G52350">
    <property type="gene designation" value="EXO70A3"/>
</dbReference>
<dbReference type="eggNOG" id="KOG2344">
    <property type="taxonomic scope" value="Eukaryota"/>
</dbReference>
<dbReference type="HOGENOM" id="CLU_010236_5_1_1"/>
<dbReference type="InParanoid" id="F4KG58"/>
<dbReference type="OMA" id="DMYEIMI"/>
<dbReference type="PRO" id="PR:F4KG58"/>
<dbReference type="Proteomes" id="UP000006548">
    <property type="component" value="Chromosome 5"/>
</dbReference>
<dbReference type="ExpressionAtlas" id="F4KG58">
    <property type="expression patterns" value="baseline and differential"/>
</dbReference>
<dbReference type="GO" id="GO:0000145">
    <property type="term" value="C:exocyst"/>
    <property type="evidence" value="ECO:0007669"/>
    <property type="project" value="InterPro"/>
</dbReference>
<dbReference type="GO" id="GO:0016020">
    <property type="term" value="C:membrane"/>
    <property type="evidence" value="ECO:0007669"/>
    <property type="project" value="UniProtKB-SubCell"/>
</dbReference>
<dbReference type="GO" id="GO:0005546">
    <property type="term" value="F:phosphatidylinositol-4,5-bisphosphate binding"/>
    <property type="evidence" value="ECO:0007669"/>
    <property type="project" value="InterPro"/>
</dbReference>
<dbReference type="GO" id="GO:0009734">
    <property type="term" value="P:auxin-activated signaling pathway"/>
    <property type="evidence" value="ECO:0007669"/>
    <property type="project" value="UniProtKB-KW"/>
</dbReference>
<dbReference type="GO" id="GO:0006887">
    <property type="term" value="P:exocytosis"/>
    <property type="evidence" value="ECO:0000314"/>
    <property type="project" value="UniProtKB"/>
</dbReference>
<dbReference type="GO" id="GO:0009630">
    <property type="term" value="P:gravitropism"/>
    <property type="evidence" value="ECO:0000315"/>
    <property type="project" value="UniProtKB"/>
</dbReference>
<dbReference type="GO" id="GO:0140964">
    <property type="term" value="P:intracellular auxin homeostasis"/>
    <property type="evidence" value="ECO:0000314"/>
    <property type="project" value="UniProtKB"/>
</dbReference>
<dbReference type="GO" id="GO:0015031">
    <property type="term" value="P:protein transport"/>
    <property type="evidence" value="ECO:0007669"/>
    <property type="project" value="UniProtKB-KW"/>
</dbReference>
<dbReference type="GO" id="GO:0010015">
    <property type="term" value="P:root morphogenesis"/>
    <property type="evidence" value="ECO:0000315"/>
    <property type="project" value="UniProtKB"/>
</dbReference>
<dbReference type="Gene3D" id="1.20.1280.170">
    <property type="entry name" value="Exocyst complex component Exo70"/>
    <property type="match status" value="1"/>
</dbReference>
<dbReference type="InterPro" id="IPR016159">
    <property type="entry name" value="Cullin_repeat-like_dom_sf"/>
</dbReference>
<dbReference type="InterPro" id="IPR004140">
    <property type="entry name" value="Exo70"/>
</dbReference>
<dbReference type="InterPro" id="IPR046364">
    <property type="entry name" value="Exo70_C"/>
</dbReference>
<dbReference type="PANTHER" id="PTHR12542:SF135">
    <property type="entry name" value="EXOCYST COMPLEX COMPONENT EXO70A3-RELATED"/>
    <property type="match status" value="1"/>
</dbReference>
<dbReference type="PANTHER" id="PTHR12542">
    <property type="entry name" value="EXOCYST COMPLEX PROTEIN EXO70"/>
    <property type="match status" value="1"/>
</dbReference>
<dbReference type="Pfam" id="PF03081">
    <property type="entry name" value="Exo70_C"/>
    <property type="match status" value="1"/>
</dbReference>
<dbReference type="SUPFAM" id="SSF74788">
    <property type="entry name" value="Cullin repeat-like"/>
    <property type="match status" value="1"/>
</dbReference>
<protein>
    <recommendedName>
        <fullName evidence="6 7">Exocyst complex component EXO70A3</fullName>
        <shortName evidence="6 7">AtExo70a3</shortName>
    </recommendedName>
    <alternativeName>
        <fullName evidence="6">Exocyst subunit Exo70 family protein A3</fullName>
    </alternativeName>
</protein>
<accession>F4KG58</accession>
<accession>Q9FHC5</accession>